<organism>
    <name type="scientific">Helicobacter pylori (strain G27)</name>
    <dbReference type="NCBI Taxonomy" id="563041"/>
    <lineage>
        <taxon>Bacteria</taxon>
        <taxon>Pseudomonadati</taxon>
        <taxon>Campylobacterota</taxon>
        <taxon>Epsilonproteobacteria</taxon>
        <taxon>Campylobacterales</taxon>
        <taxon>Helicobacteraceae</taxon>
        <taxon>Helicobacter</taxon>
    </lineage>
</organism>
<comment type="function">
    <text evidence="1">DNA ligase that catalyzes the formation of phosphodiester linkages between 5'-phosphoryl and 3'-hydroxyl groups in double-stranded DNA using NAD as a coenzyme and as the energy source for the reaction. It is essential for DNA replication and repair of damaged DNA.</text>
</comment>
<comment type="catalytic activity">
    <reaction evidence="1">
        <text>NAD(+) + (deoxyribonucleotide)n-3'-hydroxyl + 5'-phospho-(deoxyribonucleotide)m = (deoxyribonucleotide)n+m + AMP + beta-nicotinamide D-nucleotide.</text>
        <dbReference type="EC" id="6.5.1.2"/>
    </reaction>
</comment>
<comment type="cofactor">
    <cofactor evidence="1">
        <name>Mg(2+)</name>
        <dbReference type="ChEBI" id="CHEBI:18420"/>
    </cofactor>
    <cofactor evidence="1">
        <name>Mn(2+)</name>
        <dbReference type="ChEBI" id="CHEBI:29035"/>
    </cofactor>
</comment>
<comment type="similarity">
    <text evidence="1">Belongs to the NAD-dependent DNA ligase family. LigA subfamily.</text>
</comment>
<protein>
    <recommendedName>
        <fullName evidence="1">DNA ligase</fullName>
        <ecNumber evidence="1">6.5.1.2</ecNumber>
    </recommendedName>
    <alternativeName>
        <fullName evidence="1">Polydeoxyribonucleotide synthase [NAD(+)]</fullName>
    </alternativeName>
</protein>
<reference key="1">
    <citation type="journal article" date="2009" name="J. Bacteriol.">
        <title>The complete genome sequence of Helicobacter pylori strain G27.</title>
        <authorList>
            <person name="Baltrus D.A."/>
            <person name="Amieva M.R."/>
            <person name="Covacci A."/>
            <person name="Lowe T.M."/>
            <person name="Merrell D.S."/>
            <person name="Ottemann K.M."/>
            <person name="Stein M."/>
            <person name="Salama N.R."/>
            <person name="Guillemin K."/>
        </authorList>
    </citation>
    <scope>NUCLEOTIDE SEQUENCE [LARGE SCALE GENOMIC DNA]</scope>
    <source>
        <strain>G27</strain>
    </source>
</reference>
<proteinExistence type="inferred from homology"/>
<keyword id="KW-0227">DNA damage</keyword>
<keyword id="KW-0234">DNA repair</keyword>
<keyword id="KW-0235">DNA replication</keyword>
<keyword id="KW-0436">Ligase</keyword>
<keyword id="KW-0460">Magnesium</keyword>
<keyword id="KW-0464">Manganese</keyword>
<keyword id="KW-0479">Metal-binding</keyword>
<keyword id="KW-0520">NAD</keyword>
<keyword id="KW-1185">Reference proteome</keyword>
<keyword id="KW-0862">Zinc</keyword>
<name>DNLJ_HELPG</name>
<dbReference type="EC" id="6.5.1.2" evidence="1"/>
<dbReference type="EMBL" id="CP001173">
    <property type="protein sequence ID" value="ACI27335.1"/>
    <property type="molecule type" value="Genomic_DNA"/>
</dbReference>
<dbReference type="RefSeq" id="WP_000597568.1">
    <property type="nucleotide sequence ID" value="NC_011333.1"/>
</dbReference>
<dbReference type="SMR" id="B5Z6Y6"/>
<dbReference type="KEGG" id="hpg:HPG27_575"/>
<dbReference type="HOGENOM" id="CLU_007764_2_1_7"/>
<dbReference type="Proteomes" id="UP000001735">
    <property type="component" value="Chromosome"/>
</dbReference>
<dbReference type="GO" id="GO:0005829">
    <property type="term" value="C:cytosol"/>
    <property type="evidence" value="ECO:0007669"/>
    <property type="project" value="TreeGrafter"/>
</dbReference>
<dbReference type="GO" id="GO:0003677">
    <property type="term" value="F:DNA binding"/>
    <property type="evidence" value="ECO:0007669"/>
    <property type="project" value="InterPro"/>
</dbReference>
<dbReference type="GO" id="GO:0003911">
    <property type="term" value="F:DNA ligase (NAD+) activity"/>
    <property type="evidence" value="ECO:0007669"/>
    <property type="project" value="UniProtKB-UniRule"/>
</dbReference>
<dbReference type="GO" id="GO:0046872">
    <property type="term" value="F:metal ion binding"/>
    <property type="evidence" value="ECO:0007669"/>
    <property type="project" value="UniProtKB-KW"/>
</dbReference>
<dbReference type="GO" id="GO:0006281">
    <property type="term" value="P:DNA repair"/>
    <property type="evidence" value="ECO:0007669"/>
    <property type="project" value="UniProtKB-KW"/>
</dbReference>
<dbReference type="GO" id="GO:0006260">
    <property type="term" value="P:DNA replication"/>
    <property type="evidence" value="ECO:0007669"/>
    <property type="project" value="UniProtKB-KW"/>
</dbReference>
<dbReference type="CDD" id="cd17748">
    <property type="entry name" value="BRCT_DNA_ligase_like"/>
    <property type="match status" value="1"/>
</dbReference>
<dbReference type="CDD" id="cd00114">
    <property type="entry name" value="LIGANc"/>
    <property type="match status" value="1"/>
</dbReference>
<dbReference type="FunFam" id="1.10.150.20:FF:000007">
    <property type="entry name" value="DNA ligase"/>
    <property type="match status" value="1"/>
</dbReference>
<dbReference type="FunFam" id="2.40.50.140:FF:000012">
    <property type="entry name" value="DNA ligase"/>
    <property type="match status" value="1"/>
</dbReference>
<dbReference type="FunFam" id="3.30.470.30:FF:000034">
    <property type="entry name" value="DNA ligase"/>
    <property type="match status" value="1"/>
</dbReference>
<dbReference type="FunFam" id="3.40.50.10190:FF:000069">
    <property type="entry name" value="DNA ligase"/>
    <property type="match status" value="1"/>
</dbReference>
<dbReference type="Gene3D" id="1.10.150.20">
    <property type="entry name" value="5' to 3' exonuclease, C-terminal subdomain"/>
    <property type="match status" value="2"/>
</dbReference>
<dbReference type="Gene3D" id="3.40.50.10190">
    <property type="entry name" value="BRCT domain"/>
    <property type="match status" value="1"/>
</dbReference>
<dbReference type="Gene3D" id="3.30.470.30">
    <property type="entry name" value="DNA ligase/mRNA capping enzyme"/>
    <property type="match status" value="1"/>
</dbReference>
<dbReference type="Gene3D" id="1.10.287.610">
    <property type="entry name" value="Helix hairpin bin"/>
    <property type="match status" value="1"/>
</dbReference>
<dbReference type="Gene3D" id="2.40.50.140">
    <property type="entry name" value="Nucleic acid-binding proteins"/>
    <property type="match status" value="1"/>
</dbReference>
<dbReference type="HAMAP" id="MF_01588">
    <property type="entry name" value="DNA_ligase_A"/>
    <property type="match status" value="1"/>
</dbReference>
<dbReference type="InterPro" id="IPR001357">
    <property type="entry name" value="BRCT_dom"/>
</dbReference>
<dbReference type="InterPro" id="IPR036420">
    <property type="entry name" value="BRCT_dom_sf"/>
</dbReference>
<dbReference type="InterPro" id="IPR001679">
    <property type="entry name" value="DNA_ligase"/>
</dbReference>
<dbReference type="InterPro" id="IPR018239">
    <property type="entry name" value="DNA_ligase_AS"/>
</dbReference>
<dbReference type="InterPro" id="IPR033136">
    <property type="entry name" value="DNA_ligase_CS"/>
</dbReference>
<dbReference type="InterPro" id="IPR013839">
    <property type="entry name" value="DNAligase_adenylation"/>
</dbReference>
<dbReference type="InterPro" id="IPR013840">
    <property type="entry name" value="DNAligase_N"/>
</dbReference>
<dbReference type="InterPro" id="IPR003583">
    <property type="entry name" value="Hlx-hairpin-Hlx_DNA-bd_motif"/>
</dbReference>
<dbReference type="InterPro" id="IPR012340">
    <property type="entry name" value="NA-bd_OB-fold"/>
</dbReference>
<dbReference type="InterPro" id="IPR004150">
    <property type="entry name" value="NAD_DNA_ligase_OB"/>
</dbReference>
<dbReference type="InterPro" id="IPR010994">
    <property type="entry name" value="RuvA_2-like"/>
</dbReference>
<dbReference type="NCBIfam" id="TIGR00575">
    <property type="entry name" value="dnlj"/>
    <property type="match status" value="1"/>
</dbReference>
<dbReference type="NCBIfam" id="NF005932">
    <property type="entry name" value="PRK07956.1"/>
    <property type="match status" value="1"/>
</dbReference>
<dbReference type="PANTHER" id="PTHR23389">
    <property type="entry name" value="CHROMOSOME TRANSMISSION FIDELITY FACTOR 18"/>
    <property type="match status" value="1"/>
</dbReference>
<dbReference type="PANTHER" id="PTHR23389:SF9">
    <property type="entry name" value="DNA LIGASE"/>
    <property type="match status" value="1"/>
</dbReference>
<dbReference type="Pfam" id="PF00533">
    <property type="entry name" value="BRCT"/>
    <property type="match status" value="1"/>
</dbReference>
<dbReference type="Pfam" id="PF01653">
    <property type="entry name" value="DNA_ligase_aden"/>
    <property type="match status" value="1"/>
</dbReference>
<dbReference type="Pfam" id="PF03120">
    <property type="entry name" value="DNA_ligase_OB"/>
    <property type="match status" value="1"/>
</dbReference>
<dbReference type="PIRSF" id="PIRSF001604">
    <property type="entry name" value="LigA"/>
    <property type="match status" value="1"/>
</dbReference>
<dbReference type="SMART" id="SM00292">
    <property type="entry name" value="BRCT"/>
    <property type="match status" value="1"/>
</dbReference>
<dbReference type="SMART" id="SM00278">
    <property type="entry name" value="HhH1"/>
    <property type="match status" value="3"/>
</dbReference>
<dbReference type="SMART" id="SM00532">
    <property type="entry name" value="LIGANc"/>
    <property type="match status" value="1"/>
</dbReference>
<dbReference type="SUPFAM" id="SSF52113">
    <property type="entry name" value="BRCT domain"/>
    <property type="match status" value="1"/>
</dbReference>
<dbReference type="SUPFAM" id="SSF56091">
    <property type="entry name" value="DNA ligase/mRNA capping enzyme, catalytic domain"/>
    <property type="match status" value="1"/>
</dbReference>
<dbReference type="SUPFAM" id="SSF50249">
    <property type="entry name" value="Nucleic acid-binding proteins"/>
    <property type="match status" value="1"/>
</dbReference>
<dbReference type="SUPFAM" id="SSF47781">
    <property type="entry name" value="RuvA domain 2-like"/>
    <property type="match status" value="1"/>
</dbReference>
<dbReference type="PROSITE" id="PS50172">
    <property type="entry name" value="BRCT"/>
    <property type="match status" value="1"/>
</dbReference>
<dbReference type="PROSITE" id="PS01055">
    <property type="entry name" value="DNA_LIGASE_N1"/>
    <property type="match status" value="1"/>
</dbReference>
<dbReference type="PROSITE" id="PS01056">
    <property type="entry name" value="DNA_LIGASE_N2"/>
    <property type="match status" value="1"/>
</dbReference>
<evidence type="ECO:0000255" key="1">
    <source>
        <dbReference type="HAMAP-Rule" id="MF_01588"/>
    </source>
</evidence>
<gene>
    <name evidence="1" type="primary">ligA</name>
    <name type="ordered locus">HPG27_575</name>
</gene>
<sequence>MIKSQKEYLERIAYLNTLSHHYYNLDESIVSDAVYDELYQELKAYEEKNPNDIQANSPTQKVGATATNSFNKNPHLMRMWSLDDVFNQSELQAWLQRILKTYPSASFVCSPKLDGVSLNLLYQHGKLVSATTRGNGLEGELVTNNAKHIANIPHFIAYDGEIEIRGEVIISKEDFDALNKERLNANEPLFANPRNAASGSLRQLDSEITKKRKLQFIPWGVGKHSLNFLSFKECLDFIVSLGFSAIQYLNLNKNHQEIEENYHTLIREREGFFALLDGMVIVVNELNIQKELGYTQKSPKFACAYKFPALEKHTKIVGVINQVGRSGAITPVALLEPVEIAGAMINRATLHNYSEIEKKNIMLNDKVVVIRSGDVIPKIIKPLETYRDGSQQKIMRPKVCPICSHELLCEEIFTYCQNLNCPARLKESLIHFASKDALNIQGLGDKVIEQLFEEKLIVNALDLYALKLEDLMRLDKFKIKKAQNLLDAIQKSKNPPLWRLINALGIEHIGKGASKTLAKYGLNVLEKSEAEFLEMEGFGVEMVRSLVNFYASNQEFIRSLFELLNPKNSDMAEEKQESSSVFNNKTIVLTGTLSKPRQEYAQMLENLGAKITSSVSAKTDFLIVGENAGSKLALAKKHGVSVLNEEELLKRLKKLDQN</sequence>
<feature type="chain" id="PRO_0000380397" description="DNA ligase">
    <location>
        <begin position="1"/>
        <end position="658"/>
    </location>
</feature>
<feature type="domain" description="BRCT" evidence="1">
    <location>
        <begin position="577"/>
        <end position="658"/>
    </location>
</feature>
<feature type="active site" description="N6-AMP-lysine intermediate" evidence="1">
    <location>
        <position position="112"/>
    </location>
</feature>
<feature type="binding site" evidence="1">
    <location>
        <begin position="32"/>
        <end position="36"/>
    </location>
    <ligand>
        <name>NAD(+)</name>
        <dbReference type="ChEBI" id="CHEBI:57540"/>
    </ligand>
</feature>
<feature type="binding site" evidence="1">
    <location>
        <begin position="81"/>
        <end position="82"/>
    </location>
    <ligand>
        <name>NAD(+)</name>
        <dbReference type="ChEBI" id="CHEBI:57540"/>
    </ligand>
</feature>
<feature type="binding site" evidence="1">
    <location>
        <position position="133"/>
    </location>
    <ligand>
        <name>NAD(+)</name>
        <dbReference type="ChEBI" id="CHEBI:57540"/>
    </ligand>
</feature>
<feature type="binding site" evidence="1">
    <location>
        <position position="167"/>
    </location>
    <ligand>
        <name>NAD(+)</name>
        <dbReference type="ChEBI" id="CHEBI:57540"/>
    </ligand>
</feature>
<feature type="binding site" evidence="1">
    <location>
        <position position="306"/>
    </location>
    <ligand>
        <name>NAD(+)</name>
        <dbReference type="ChEBI" id="CHEBI:57540"/>
    </ligand>
</feature>
<feature type="binding site" evidence="1">
    <location>
        <position position="400"/>
    </location>
    <ligand>
        <name>Zn(2+)</name>
        <dbReference type="ChEBI" id="CHEBI:29105"/>
    </ligand>
</feature>
<feature type="binding site" evidence="1">
    <location>
        <position position="403"/>
    </location>
    <ligand>
        <name>Zn(2+)</name>
        <dbReference type="ChEBI" id="CHEBI:29105"/>
    </ligand>
</feature>
<feature type="binding site" evidence="1">
    <location>
        <position position="416"/>
    </location>
    <ligand>
        <name>Zn(2+)</name>
        <dbReference type="ChEBI" id="CHEBI:29105"/>
    </ligand>
</feature>
<feature type="binding site" evidence="1">
    <location>
        <position position="421"/>
    </location>
    <ligand>
        <name>Zn(2+)</name>
        <dbReference type="ChEBI" id="CHEBI:29105"/>
    </ligand>
</feature>
<accession>B5Z6Y6</accession>